<protein>
    <recommendedName>
        <fullName evidence="1">Thiazole synthase</fullName>
        <ecNumber evidence="1">2.8.1.10</ecNumber>
    </recommendedName>
</protein>
<proteinExistence type="inferred from homology"/>
<name>THIG_HELHP</name>
<accession>Q7VF28</accession>
<comment type="function">
    <text evidence="1">Catalyzes the rearrangement of 1-deoxy-D-xylulose 5-phosphate (DXP) to produce the thiazole phosphate moiety of thiamine. Sulfur is provided by the thiocarboxylate moiety of the carrier protein ThiS. In vitro, sulfur can be provided by H(2)S.</text>
</comment>
<comment type="catalytic activity">
    <reaction evidence="1">
        <text>[ThiS sulfur-carrier protein]-C-terminal-Gly-aminoethanethioate + 2-iminoacetate + 1-deoxy-D-xylulose 5-phosphate = [ThiS sulfur-carrier protein]-C-terminal Gly-Gly + 2-[(2R,5Z)-2-carboxy-4-methylthiazol-5(2H)-ylidene]ethyl phosphate + 2 H2O + H(+)</text>
        <dbReference type="Rhea" id="RHEA:26297"/>
        <dbReference type="Rhea" id="RHEA-COMP:12909"/>
        <dbReference type="Rhea" id="RHEA-COMP:19908"/>
        <dbReference type="ChEBI" id="CHEBI:15377"/>
        <dbReference type="ChEBI" id="CHEBI:15378"/>
        <dbReference type="ChEBI" id="CHEBI:57792"/>
        <dbReference type="ChEBI" id="CHEBI:62899"/>
        <dbReference type="ChEBI" id="CHEBI:77846"/>
        <dbReference type="ChEBI" id="CHEBI:90778"/>
        <dbReference type="ChEBI" id="CHEBI:232372"/>
        <dbReference type="EC" id="2.8.1.10"/>
    </reaction>
</comment>
<comment type="pathway">
    <text evidence="1">Cofactor biosynthesis; thiamine diphosphate biosynthesis.</text>
</comment>
<comment type="subunit">
    <text evidence="1">Homotetramer. Forms heterodimers with either ThiH or ThiS.</text>
</comment>
<comment type="subcellular location">
    <subcellularLocation>
        <location evidence="1">Cytoplasm</location>
    </subcellularLocation>
</comment>
<comment type="similarity">
    <text evidence="1">Belongs to the ThiG family.</text>
</comment>
<organism>
    <name type="scientific">Helicobacter hepaticus (strain ATCC 51449 / 3B1)</name>
    <dbReference type="NCBI Taxonomy" id="235279"/>
    <lineage>
        <taxon>Bacteria</taxon>
        <taxon>Pseudomonadati</taxon>
        <taxon>Campylobacterota</taxon>
        <taxon>Epsilonproteobacteria</taxon>
        <taxon>Campylobacterales</taxon>
        <taxon>Helicobacteraceae</taxon>
        <taxon>Helicobacter</taxon>
    </lineage>
</organism>
<feature type="chain" id="PRO_0000162826" description="Thiazole synthase">
    <location>
        <begin position="1"/>
        <end position="263"/>
    </location>
</feature>
<feature type="active site" description="Schiff-base intermediate with DXP" evidence="1">
    <location>
        <position position="102"/>
    </location>
</feature>
<feature type="binding site" evidence="1">
    <location>
        <position position="164"/>
    </location>
    <ligand>
        <name>1-deoxy-D-xylulose 5-phosphate</name>
        <dbReference type="ChEBI" id="CHEBI:57792"/>
    </ligand>
</feature>
<feature type="binding site" evidence="1">
    <location>
        <begin position="190"/>
        <end position="191"/>
    </location>
    <ligand>
        <name>1-deoxy-D-xylulose 5-phosphate</name>
        <dbReference type="ChEBI" id="CHEBI:57792"/>
    </ligand>
</feature>
<feature type="binding site" evidence="1">
    <location>
        <begin position="212"/>
        <end position="213"/>
    </location>
    <ligand>
        <name>1-deoxy-D-xylulose 5-phosphate</name>
        <dbReference type="ChEBI" id="CHEBI:57792"/>
    </ligand>
</feature>
<keyword id="KW-0963">Cytoplasm</keyword>
<keyword id="KW-1185">Reference proteome</keyword>
<keyword id="KW-0704">Schiff base</keyword>
<keyword id="KW-0784">Thiamine biosynthesis</keyword>
<keyword id="KW-0808">Transferase</keyword>
<sequence length="263" mass="28021">MNHIKDTLKIGSHTFASRLIVGSGKYKDFATTKEATLASGAEIITVAVRRVNIMDNKSENLLETFKDTNIQFLPNSAGCVNAKEAITLFRLVREATGIDFIKLEIIGDIDKTLYPDVIESLQATEILANEGFCVLAYTNDDPIMAKRLENAGASAIMPLAAPIGSGLGIQNRYNIGFIKEAVKVPVIVDAGVGCASDASIAMELGADAVLTNTAIAQAQNPVTMAEAMKYAVKAGRLSYLAGRIPRKAYASASSPLEGMMQFG</sequence>
<gene>
    <name evidence="1" type="primary">thiG</name>
    <name type="ordered locus">HH_1851</name>
</gene>
<reference key="1">
    <citation type="journal article" date="2003" name="Proc. Natl. Acad. Sci. U.S.A.">
        <title>The complete genome sequence of the carcinogenic bacterium Helicobacter hepaticus.</title>
        <authorList>
            <person name="Suerbaum S."/>
            <person name="Josenhans C."/>
            <person name="Sterzenbach T."/>
            <person name="Drescher B."/>
            <person name="Brandt P."/>
            <person name="Bell M."/>
            <person name="Droege M."/>
            <person name="Fartmann B."/>
            <person name="Fischer H.-P."/>
            <person name="Ge Z."/>
            <person name="Hoerster A."/>
            <person name="Holland R."/>
            <person name="Klein K."/>
            <person name="Koenig J."/>
            <person name="Macko L."/>
            <person name="Mendz G.L."/>
            <person name="Nyakatura G."/>
            <person name="Schauer D.B."/>
            <person name="Shen Z."/>
            <person name="Weber J."/>
            <person name="Frosch M."/>
            <person name="Fox J.G."/>
        </authorList>
    </citation>
    <scope>NUCLEOTIDE SEQUENCE [LARGE SCALE GENOMIC DNA]</scope>
    <source>
        <strain>ATCC 51449 / 3B1</strain>
    </source>
</reference>
<evidence type="ECO:0000255" key="1">
    <source>
        <dbReference type="HAMAP-Rule" id="MF_00443"/>
    </source>
</evidence>
<dbReference type="EC" id="2.8.1.10" evidence="1"/>
<dbReference type="EMBL" id="AE017125">
    <property type="protein sequence ID" value="AAP78448.1"/>
    <property type="molecule type" value="Genomic_DNA"/>
</dbReference>
<dbReference type="SMR" id="Q7VF28"/>
<dbReference type="STRING" id="235279.HH_1851"/>
<dbReference type="KEGG" id="hhe:HH_1851"/>
<dbReference type="eggNOG" id="COG2022">
    <property type="taxonomic scope" value="Bacteria"/>
</dbReference>
<dbReference type="HOGENOM" id="CLU_062233_1_0_7"/>
<dbReference type="UniPathway" id="UPA00060"/>
<dbReference type="Proteomes" id="UP000002495">
    <property type="component" value="Chromosome"/>
</dbReference>
<dbReference type="GO" id="GO:0005737">
    <property type="term" value="C:cytoplasm"/>
    <property type="evidence" value="ECO:0007669"/>
    <property type="project" value="UniProtKB-SubCell"/>
</dbReference>
<dbReference type="GO" id="GO:1990107">
    <property type="term" value="F:thiazole synthase activity"/>
    <property type="evidence" value="ECO:0007669"/>
    <property type="project" value="UniProtKB-EC"/>
</dbReference>
<dbReference type="GO" id="GO:0009229">
    <property type="term" value="P:thiamine diphosphate biosynthetic process"/>
    <property type="evidence" value="ECO:0007669"/>
    <property type="project" value="UniProtKB-UniRule"/>
</dbReference>
<dbReference type="CDD" id="cd04728">
    <property type="entry name" value="ThiG"/>
    <property type="match status" value="1"/>
</dbReference>
<dbReference type="Gene3D" id="3.20.20.70">
    <property type="entry name" value="Aldolase class I"/>
    <property type="match status" value="1"/>
</dbReference>
<dbReference type="HAMAP" id="MF_00443">
    <property type="entry name" value="ThiG"/>
    <property type="match status" value="1"/>
</dbReference>
<dbReference type="InterPro" id="IPR013785">
    <property type="entry name" value="Aldolase_TIM"/>
</dbReference>
<dbReference type="InterPro" id="IPR033983">
    <property type="entry name" value="Thiazole_synthase_ThiG"/>
</dbReference>
<dbReference type="InterPro" id="IPR008867">
    <property type="entry name" value="ThiG"/>
</dbReference>
<dbReference type="PANTHER" id="PTHR34266">
    <property type="entry name" value="THIAZOLE SYNTHASE"/>
    <property type="match status" value="1"/>
</dbReference>
<dbReference type="PANTHER" id="PTHR34266:SF2">
    <property type="entry name" value="THIAZOLE SYNTHASE"/>
    <property type="match status" value="1"/>
</dbReference>
<dbReference type="Pfam" id="PF05690">
    <property type="entry name" value="ThiG"/>
    <property type="match status" value="1"/>
</dbReference>
<dbReference type="SUPFAM" id="SSF110399">
    <property type="entry name" value="ThiG-like"/>
    <property type="match status" value="1"/>
</dbReference>